<proteinExistence type="evidence at transcript level"/>
<evidence type="ECO:0000250" key="1"/>
<evidence type="ECO:0000305" key="2"/>
<sequence length="515" mass="56320">MTVTYAHEPFTDFTEAKNKTAFGESLAFVNTQLGKHYPLVINGEKIETDRKIISINPANKEEIIGYASTADQELAEKAMQAALQAFDSWKKQRPEHRANILFKAAAILRRRKHEFSSYLVKEAGKPWKEADADTAEAIDFLEFYARQMLKLKEGAPVKSRAGEVNQYHYEALGVGIVISPFNFPLAIMAGTAVAAIVTGNTILLKPADAAPVVAAKFVEVMEEAGLPNGVLNYIPGDGAEIGDFLVEHPKTRFVSFTGSRAVGCRIYERAAKVQPGQKWLKRVIAEMGGKDTVLVDKDADLDLAASSIVYSAFGYSGQKCSAGSRAVIHQDVYDEVVEKAVALTKTLTVGNPEDPDTYMGPVIHEASYNKVMKYIEIGKSEGKLLAGGEGDDSKGYFIQPTIFADVDENARLMQEEIFGPVVAICKARDFDHMLEIANNTEYGLTGALLTKNRAHIERAREDFHVGNLYFNRGCTGAIVGYQPFGGFNMSGTDSKAGGPDYLILHMQAKTTSEAF</sequence>
<reference key="1">
    <citation type="journal article" date="1993" name="Mol. Microbiol.">
        <title>Bacillus subtilis genome project: cloning and sequencing of the 97 kb region from 325 degrees to 333 degrees.</title>
        <authorList>
            <person name="Glaser P."/>
            <person name="Kunst F."/>
            <person name="Arnaud M."/>
            <person name="Coudart M.P."/>
            <person name="Gonzales W."/>
            <person name="Hullo M.-F."/>
            <person name="Ionescu M."/>
            <person name="Lubochinsky B."/>
            <person name="Marcelino L."/>
            <person name="Moszer I."/>
            <person name="Presecan E."/>
            <person name="Santana M."/>
            <person name="Schneider E."/>
            <person name="Schweizer J."/>
            <person name="Vertes A."/>
            <person name="Rapoport G."/>
            <person name="Danchin A."/>
        </authorList>
    </citation>
    <scope>NUCLEOTIDE SEQUENCE [GENOMIC DNA]</scope>
    <source>
        <strain>168</strain>
    </source>
</reference>
<reference key="2">
    <citation type="journal article" date="1997" name="Nature">
        <title>The complete genome sequence of the Gram-positive bacterium Bacillus subtilis.</title>
        <authorList>
            <person name="Kunst F."/>
            <person name="Ogasawara N."/>
            <person name="Moszer I."/>
            <person name="Albertini A.M."/>
            <person name="Alloni G."/>
            <person name="Azevedo V."/>
            <person name="Bertero M.G."/>
            <person name="Bessieres P."/>
            <person name="Bolotin A."/>
            <person name="Borchert S."/>
            <person name="Borriss R."/>
            <person name="Boursier L."/>
            <person name="Brans A."/>
            <person name="Braun M."/>
            <person name="Brignell S.C."/>
            <person name="Bron S."/>
            <person name="Brouillet S."/>
            <person name="Bruschi C.V."/>
            <person name="Caldwell B."/>
            <person name="Capuano V."/>
            <person name="Carter N.M."/>
            <person name="Choi S.-K."/>
            <person name="Codani J.-J."/>
            <person name="Connerton I.F."/>
            <person name="Cummings N.J."/>
            <person name="Daniel R.A."/>
            <person name="Denizot F."/>
            <person name="Devine K.M."/>
            <person name="Duesterhoeft A."/>
            <person name="Ehrlich S.D."/>
            <person name="Emmerson P.T."/>
            <person name="Entian K.-D."/>
            <person name="Errington J."/>
            <person name="Fabret C."/>
            <person name="Ferrari E."/>
            <person name="Foulger D."/>
            <person name="Fritz C."/>
            <person name="Fujita M."/>
            <person name="Fujita Y."/>
            <person name="Fuma S."/>
            <person name="Galizzi A."/>
            <person name="Galleron N."/>
            <person name="Ghim S.-Y."/>
            <person name="Glaser P."/>
            <person name="Goffeau A."/>
            <person name="Golightly E.J."/>
            <person name="Grandi G."/>
            <person name="Guiseppi G."/>
            <person name="Guy B.J."/>
            <person name="Haga K."/>
            <person name="Haiech J."/>
            <person name="Harwood C.R."/>
            <person name="Henaut A."/>
            <person name="Hilbert H."/>
            <person name="Holsappel S."/>
            <person name="Hosono S."/>
            <person name="Hullo M.-F."/>
            <person name="Itaya M."/>
            <person name="Jones L.-M."/>
            <person name="Joris B."/>
            <person name="Karamata D."/>
            <person name="Kasahara Y."/>
            <person name="Klaerr-Blanchard M."/>
            <person name="Klein C."/>
            <person name="Kobayashi Y."/>
            <person name="Koetter P."/>
            <person name="Koningstein G."/>
            <person name="Krogh S."/>
            <person name="Kumano M."/>
            <person name="Kurita K."/>
            <person name="Lapidus A."/>
            <person name="Lardinois S."/>
            <person name="Lauber J."/>
            <person name="Lazarevic V."/>
            <person name="Lee S.-M."/>
            <person name="Levine A."/>
            <person name="Liu H."/>
            <person name="Masuda S."/>
            <person name="Mauel C."/>
            <person name="Medigue C."/>
            <person name="Medina N."/>
            <person name="Mellado R.P."/>
            <person name="Mizuno M."/>
            <person name="Moestl D."/>
            <person name="Nakai S."/>
            <person name="Noback M."/>
            <person name="Noone D."/>
            <person name="O'Reilly M."/>
            <person name="Ogawa K."/>
            <person name="Ogiwara A."/>
            <person name="Oudega B."/>
            <person name="Park S.-H."/>
            <person name="Parro V."/>
            <person name="Pohl T.M."/>
            <person name="Portetelle D."/>
            <person name="Porwollik S."/>
            <person name="Prescott A.M."/>
            <person name="Presecan E."/>
            <person name="Pujic P."/>
            <person name="Purnelle B."/>
            <person name="Rapoport G."/>
            <person name="Rey M."/>
            <person name="Reynolds S."/>
            <person name="Rieger M."/>
            <person name="Rivolta C."/>
            <person name="Rocha E."/>
            <person name="Roche B."/>
            <person name="Rose M."/>
            <person name="Sadaie Y."/>
            <person name="Sato T."/>
            <person name="Scanlan E."/>
            <person name="Schleich S."/>
            <person name="Schroeter R."/>
            <person name="Scoffone F."/>
            <person name="Sekiguchi J."/>
            <person name="Sekowska A."/>
            <person name="Seror S.J."/>
            <person name="Serror P."/>
            <person name="Shin B.-S."/>
            <person name="Soldo B."/>
            <person name="Sorokin A."/>
            <person name="Tacconi E."/>
            <person name="Takagi T."/>
            <person name="Takahashi H."/>
            <person name="Takemaru K."/>
            <person name="Takeuchi M."/>
            <person name="Tamakoshi A."/>
            <person name="Tanaka T."/>
            <person name="Terpstra P."/>
            <person name="Tognoni A."/>
            <person name="Tosato V."/>
            <person name="Uchiyama S."/>
            <person name="Vandenbol M."/>
            <person name="Vannier F."/>
            <person name="Vassarotti A."/>
            <person name="Viari A."/>
            <person name="Wambutt R."/>
            <person name="Wedler E."/>
            <person name="Wedler H."/>
            <person name="Weitzenegger T."/>
            <person name="Winters P."/>
            <person name="Wipat A."/>
            <person name="Yamamoto H."/>
            <person name="Yamane K."/>
            <person name="Yasumoto K."/>
            <person name="Yata K."/>
            <person name="Yoshida K."/>
            <person name="Yoshikawa H.-F."/>
            <person name="Zumstein E."/>
            <person name="Yoshikawa H."/>
            <person name="Danchin A."/>
        </authorList>
    </citation>
    <scope>NUCLEOTIDE SEQUENCE [LARGE SCALE GENOMIC DNA]</scope>
    <source>
        <strain>168</strain>
    </source>
</reference>
<feature type="chain" id="PRO_0000056511" description="1-pyrroline-5-carboxylate dehydrogenase">
    <location>
        <begin position="1"/>
        <end position="515"/>
    </location>
</feature>
<feature type="active site" evidence="1">
    <location>
        <position position="286"/>
    </location>
</feature>
<feature type="active site" evidence="1">
    <location>
        <position position="320"/>
    </location>
</feature>
<comment type="catalytic activity">
    <reaction>
        <text>L-glutamate 5-semialdehyde + NAD(+) + H2O = L-glutamate + NADH + 2 H(+)</text>
        <dbReference type="Rhea" id="RHEA:30235"/>
        <dbReference type="ChEBI" id="CHEBI:15377"/>
        <dbReference type="ChEBI" id="CHEBI:15378"/>
        <dbReference type="ChEBI" id="CHEBI:29985"/>
        <dbReference type="ChEBI" id="CHEBI:57540"/>
        <dbReference type="ChEBI" id="CHEBI:57945"/>
        <dbReference type="ChEBI" id="CHEBI:58066"/>
        <dbReference type="EC" id="1.2.1.88"/>
    </reaction>
</comment>
<comment type="pathway">
    <text>Amino-acid degradation; L-proline degradation into L-glutamate; L-glutamate from L-proline: step 2/2.</text>
</comment>
<comment type="induction">
    <text>Expression is sigma L dependent and induced by arginine.</text>
</comment>
<comment type="similarity">
    <text evidence="2">Belongs to the aldehyde dehydrogenase family. RocA subfamily.</text>
</comment>
<protein>
    <recommendedName>
        <fullName>1-pyrroline-5-carboxylate dehydrogenase</fullName>
        <shortName>P5C dehydrogenase</shortName>
        <ecNumber>1.2.1.88</ecNumber>
    </recommendedName>
    <alternativeName>
        <fullName>L-glutamate gamma-semialdehyde dehydrogenase</fullName>
    </alternativeName>
</protein>
<dbReference type="EC" id="1.2.1.88"/>
<dbReference type="EMBL" id="X73124">
    <property type="protein sequence ID" value="CAA51632.1"/>
    <property type="molecule type" value="Genomic_DNA"/>
</dbReference>
<dbReference type="EMBL" id="AL009126">
    <property type="protein sequence ID" value="CAB15805.1"/>
    <property type="molecule type" value="Genomic_DNA"/>
</dbReference>
<dbReference type="PIR" id="S39731">
    <property type="entry name" value="S39731"/>
</dbReference>
<dbReference type="RefSeq" id="NP_391658.1">
    <property type="nucleotide sequence ID" value="NC_000964.3"/>
</dbReference>
<dbReference type="SMR" id="P39634"/>
<dbReference type="FunCoup" id="P39634">
    <property type="interactions" value="353"/>
</dbReference>
<dbReference type="STRING" id="224308.BSU37780"/>
<dbReference type="jPOST" id="P39634"/>
<dbReference type="PaxDb" id="224308-BSU37780"/>
<dbReference type="EnsemblBacteria" id="CAB15805">
    <property type="protein sequence ID" value="CAB15805"/>
    <property type="gene ID" value="BSU_37780"/>
</dbReference>
<dbReference type="GeneID" id="937222"/>
<dbReference type="KEGG" id="bsu:BSU37780"/>
<dbReference type="PATRIC" id="fig|224308.179.peg.4090"/>
<dbReference type="eggNOG" id="COG1012">
    <property type="taxonomic scope" value="Bacteria"/>
</dbReference>
<dbReference type="InParanoid" id="P39634"/>
<dbReference type="OrthoDB" id="9762913at2"/>
<dbReference type="PhylomeDB" id="P39634"/>
<dbReference type="BioCyc" id="BSUB:BSU37780-MONOMER"/>
<dbReference type="UniPathway" id="UPA00261">
    <property type="reaction ID" value="UER00374"/>
</dbReference>
<dbReference type="Proteomes" id="UP000001570">
    <property type="component" value="Chromosome"/>
</dbReference>
<dbReference type="GO" id="GO:0009898">
    <property type="term" value="C:cytoplasmic side of plasma membrane"/>
    <property type="evidence" value="ECO:0000318"/>
    <property type="project" value="GO_Central"/>
</dbReference>
<dbReference type="GO" id="GO:0003842">
    <property type="term" value="F:1-pyrroline-5-carboxylate dehydrogenase activity"/>
    <property type="evidence" value="ECO:0000318"/>
    <property type="project" value="GO_Central"/>
</dbReference>
<dbReference type="GO" id="GO:0006537">
    <property type="term" value="P:glutamate biosynthetic process"/>
    <property type="evidence" value="ECO:0007669"/>
    <property type="project" value="UniProtKB-UniRule"/>
</dbReference>
<dbReference type="GO" id="GO:0010133">
    <property type="term" value="P:proline catabolic process to glutamate"/>
    <property type="evidence" value="ECO:0000318"/>
    <property type="project" value="GO_Central"/>
</dbReference>
<dbReference type="CDD" id="cd07124">
    <property type="entry name" value="ALDH_PutA-P5CDH-RocA"/>
    <property type="match status" value="1"/>
</dbReference>
<dbReference type="FunFam" id="3.40.309.10:FF:000005">
    <property type="entry name" value="1-pyrroline-5-carboxylate dehydrogenase 1"/>
    <property type="match status" value="1"/>
</dbReference>
<dbReference type="FunFam" id="3.40.605.10:FF:000045">
    <property type="entry name" value="1-pyrroline-5-carboxylate dehydrogenase 1"/>
    <property type="match status" value="1"/>
</dbReference>
<dbReference type="Gene3D" id="3.40.605.10">
    <property type="entry name" value="Aldehyde Dehydrogenase, Chain A, domain 1"/>
    <property type="match status" value="1"/>
</dbReference>
<dbReference type="Gene3D" id="3.40.309.10">
    <property type="entry name" value="Aldehyde Dehydrogenase, Chain A, domain 2"/>
    <property type="match status" value="1"/>
</dbReference>
<dbReference type="HAMAP" id="MF_00733">
    <property type="entry name" value="RocA"/>
    <property type="match status" value="1"/>
</dbReference>
<dbReference type="InterPro" id="IPR016161">
    <property type="entry name" value="Ald_DH/histidinol_DH"/>
</dbReference>
<dbReference type="InterPro" id="IPR016163">
    <property type="entry name" value="Ald_DH_C"/>
</dbReference>
<dbReference type="InterPro" id="IPR016160">
    <property type="entry name" value="Ald_DH_CS_CYS"/>
</dbReference>
<dbReference type="InterPro" id="IPR029510">
    <property type="entry name" value="Ald_DH_CS_GLU"/>
</dbReference>
<dbReference type="InterPro" id="IPR016162">
    <property type="entry name" value="Ald_DH_N"/>
</dbReference>
<dbReference type="InterPro" id="IPR015590">
    <property type="entry name" value="Aldehyde_DH_dom"/>
</dbReference>
<dbReference type="InterPro" id="IPR050485">
    <property type="entry name" value="Proline_metab_enzyme"/>
</dbReference>
<dbReference type="InterPro" id="IPR005932">
    <property type="entry name" value="RocA"/>
</dbReference>
<dbReference type="InterPro" id="IPR047597">
    <property type="entry name" value="RocA_bacillales"/>
</dbReference>
<dbReference type="NCBIfam" id="TIGR01237">
    <property type="entry name" value="D1pyr5carbox2"/>
    <property type="match status" value="1"/>
</dbReference>
<dbReference type="NCBIfam" id="NF002852">
    <property type="entry name" value="PRK03137.1"/>
    <property type="match status" value="1"/>
</dbReference>
<dbReference type="PANTHER" id="PTHR42862">
    <property type="entry name" value="DELTA-1-PYRROLINE-5-CARBOXYLATE DEHYDROGENASE 1, ISOFORM A-RELATED"/>
    <property type="match status" value="1"/>
</dbReference>
<dbReference type="PANTHER" id="PTHR42862:SF1">
    <property type="entry name" value="DELTA-1-PYRROLINE-5-CARBOXYLATE DEHYDROGENASE 2, ISOFORM A-RELATED"/>
    <property type="match status" value="1"/>
</dbReference>
<dbReference type="Pfam" id="PF00171">
    <property type="entry name" value="Aldedh"/>
    <property type="match status" value="1"/>
</dbReference>
<dbReference type="SUPFAM" id="SSF53720">
    <property type="entry name" value="ALDH-like"/>
    <property type="match status" value="1"/>
</dbReference>
<dbReference type="PROSITE" id="PS00070">
    <property type="entry name" value="ALDEHYDE_DEHYDR_CYS"/>
    <property type="match status" value="1"/>
</dbReference>
<dbReference type="PROSITE" id="PS00687">
    <property type="entry name" value="ALDEHYDE_DEHYDR_GLU"/>
    <property type="match status" value="1"/>
</dbReference>
<gene>
    <name type="primary">rocA</name>
    <name type="ordered locus">BSU37780</name>
    <name type="ORF">ipa-76d</name>
</gene>
<organism>
    <name type="scientific">Bacillus subtilis (strain 168)</name>
    <dbReference type="NCBI Taxonomy" id="224308"/>
    <lineage>
        <taxon>Bacteria</taxon>
        <taxon>Bacillati</taxon>
        <taxon>Bacillota</taxon>
        <taxon>Bacilli</taxon>
        <taxon>Bacillales</taxon>
        <taxon>Bacillaceae</taxon>
        <taxon>Bacillus</taxon>
    </lineage>
</organism>
<keyword id="KW-0520">NAD</keyword>
<keyword id="KW-0560">Oxidoreductase</keyword>
<keyword id="KW-1185">Reference proteome</keyword>
<name>ROCA_BACSU</name>
<accession>P39634</accession>